<accession>Q6Z7B0</accession>
<accession>O24182</accession>
<name>BIP1_ORYSJ</name>
<comment type="function">
    <text evidence="5 6 13">Key chaperone involved in folding of secretory proteins in the endoplasmic reticulum (ER) lumen (Probable). Involved in ER quality control for seed storage proteins during seed maturation (PubMed:19567376, PubMed:21223397). Functions as a sensor of the ER stress response, and provides suitable conditions for the production of secretory proteins by alleviating ER stress (PubMed:19567376, PubMed:21223397).</text>
</comment>
<comment type="subunit">
    <text evidence="7">Interacts with P58A, P58B and ERDJ3B.</text>
</comment>
<comment type="subcellular location">
    <subcellularLocation>
        <location evidence="5 8">Endoplasmic reticulum lumen</location>
    </subcellularLocation>
    <text evidence="8">Localizes close to the endoplasmic reticulum (ER) membrane complex of developing endosperm cells. Localizes to the periphery of the prolamine protein bodies which originate directly from the ER.</text>
</comment>
<comment type="developmental stage">
    <text evidence="8">During seed development, expressed from 5 to 20 days after flowering (DAF), with a peak at 10 DAF. Not expressed in mature seeds.</text>
</comment>
<comment type="induction">
    <text evidence="6 7">By dithiothreitol-induced endoplasmic reticulum (ER) stress response (PubMed:21223397, PubMed:24153418). Induced by tunicamycin-induced ER stress response (PubMed:24153418).</text>
</comment>
<comment type="miscellaneous">
    <text evidence="5">The kernels of the over-expressing transformant exhibit floury and shrunken features due to defects in seed storage proteins and starch synthesis.</text>
</comment>
<comment type="similarity">
    <text evidence="12">Belongs to the heat shock protein 70 family.</text>
</comment>
<reference key="1">
    <citation type="journal article" date="1997" name="Plant Cell Physiol.">
        <title>Molecular cloning, expression and subcellular localization of a BiP homolog from rice endosperm tissue.</title>
        <authorList>
            <person name="Muench D.G."/>
            <person name="Wu Y."/>
            <person name="Zhang Y."/>
            <person name="Li X."/>
            <person name="Boston R.S."/>
            <person name="Okita T.W."/>
        </authorList>
    </citation>
    <scope>NUCLEOTIDE SEQUENCE [MRNA]</scope>
    <scope>SUBCELLULAR LOCATION</scope>
    <scope>DEVELOPMENTAL STAGE</scope>
</reference>
<reference key="2">
    <citation type="submission" date="2007-11" db="EMBL/GenBank/DDBJ databases">
        <title>Molecular cloning of the dnak-type molecular chaperone Bip gene in rice.</title>
        <authorList>
            <person name="Yoon U.H."/>
            <person name="Kim Y.H."/>
        </authorList>
    </citation>
    <scope>NUCLEOTIDE SEQUENCE [MRNA]</scope>
    <source>
        <strain>cv. Ilpoombyeo</strain>
    </source>
</reference>
<reference key="3">
    <citation type="journal article" date="2005" name="Nature">
        <title>The map-based sequence of the rice genome.</title>
        <authorList>
            <consortium name="International rice genome sequencing project (IRGSP)"/>
        </authorList>
    </citation>
    <scope>NUCLEOTIDE SEQUENCE [LARGE SCALE GENOMIC DNA]</scope>
    <source>
        <strain>cv. Nipponbare</strain>
    </source>
</reference>
<reference key="4">
    <citation type="journal article" date="2008" name="Nucleic Acids Res.">
        <title>The rice annotation project database (RAP-DB): 2008 update.</title>
        <authorList>
            <consortium name="The rice annotation project (RAP)"/>
        </authorList>
    </citation>
    <scope>GENOME REANNOTATION</scope>
    <source>
        <strain>cv. Nipponbare</strain>
    </source>
</reference>
<reference key="5">
    <citation type="journal article" date="2013" name="Rice">
        <title>Improvement of the Oryza sativa Nipponbare reference genome using next generation sequence and optical map data.</title>
        <authorList>
            <person name="Kawahara Y."/>
            <person name="de la Bastide M."/>
            <person name="Hamilton J.P."/>
            <person name="Kanamori H."/>
            <person name="McCombie W.R."/>
            <person name="Ouyang S."/>
            <person name="Schwartz D.C."/>
            <person name="Tanaka T."/>
            <person name="Wu J."/>
            <person name="Zhou S."/>
            <person name="Childs K.L."/>
            <person name="Davidson R.M."/>
            <person name="Lin H."/>
            <person name="Quesada-Ocampo L."/>
            <person name="Vaillancourt B."/>
            <person name="Sakai H."/>
            <person name="Lee S.S."/>
            <person name="Kim J."/>
            <person name="Numa H."/>
            <person name="Itoh T."/>
            <person name="Buell C.R."/>
            <person name="Matsumoto T."/>
        </authorList>
    </citation>
    <scope>GENOME REANNOTATION</scope>
    <source>
        <strain>cv. Nipponbare</strain>
    </source>
</reference>
<reference key="6">
    <citation type="journal article" date="2005" name="PLoS Biol.">
        <title>The genomes of Oryza sativa: a history of duplications.</title>
        <authorList>
            <person name="Yu J."/>
            <person name="Wang J."/>
            <person name="Lin W."/>
            <person name="Li S."/>
            <person name="Li H."/>
            <person name="Zhou J."/>
            <person name="Ni P."/>
            <person name="Dong W."/>
            <person name="Hu S."/>
            <person name="Zeng C."/>
            <person name="Zhang J."/>
            <person name="Zhang Y."/>
            <person name="Li R."/>
            <person name="Xu Z."/>
            <person name="Li S."/>
            <person name="Li X."/>
            <person name="Zheng H."/>
            <person name="Cong L."/>
            <person name="Lin L."/>
            <person name="Yin J."/>
            <person name="Geng J."/>
            <person name="Li G."/>
            <person name="Shi J."/>
            <person name="Liu J."/>
            <person name="Lv H."/>
            <person name="Li J."/>
            <person name="Wang J."/>
            <person name="Deng Y."/>
            <person name="Ran L."/>
            <person name="Shi X."/>
            <person name="Wang X."/>
            <person name="Wu Q."/>
            <person name="Li C."/>
            <person name="Ren X."/>
            <person name="Wang J."/>
            <person name="Wang X."/>
            <person name="Li D."/>
            <person name="Liu D."/>
            <person name="Zhang X."/>
            <person name="Ji Z."/>
            <person name="Zhao W."/>
            <person name="Sun Y."/>
            <person name="Zhang Z."/>
            <person name="Bao J."/>
            <person name="Han Y."/>
            <person name="Dong L."/>
            <person name="Ji J."/>
            <person name="Chen P."/>
            <person name="Wu S."/>
            <person name="Liu J."/>
            <person name="Xiao Y."/>
            <person name="Bu D."/>
            <person name="Tan J."/>
            <person name="Yang L."/>
            <person name="Ye C."/>
            <person name="Zhang J."/>
            <person name="Xu J."/>
            <person name="Zhou Y."/>
            <person name="Yu Y."/>
            <person name="Zhang B."/>
            <person name="Zhuang S."/>
            <person name="Wei H."/>
            <person name="Liu B."/>
            <person name="Lei M."/>
            <person name="Yu H."/>
            <person name="Li Y."/>
            <person name="Xu H."/>
            <person name="Wei S."/>
            <person name="He X."/>
            <person name="Fang L."/>
            <person name="Zhang Z."/>
            <person name="Zhang Y."/>
            <person name="Huang X."/>
            <person name="Su Z."/>
            <person name="Tong W."/>
            <person name="Li J."/>
            <person name="Tong Z."/>
            <person name="Li S."/>
            <person name="Ye J."/>
            <person name="Wang L."/>
            <person name="Fang L."/>
            <person name="Lei T."/>
            <person name="Chen C.-S."/>
            <person name="Chen H.-C."/>
            <person name="Xu Z."/>
            <person name="Li H."/>
            <person name="Huang H."/>
            <person name="Zhang F."/>
            <person name="Xu H."/>
            <person name="Li N."/>
            <person name="Zhao C."/>
            <person name="Li S."/>
            <person name="Dong L."/>
            <person name="Huang Y."/>
            <person name="Li L."/>
            <person name="Xi Y."/>
            <person name="Qi Q."/>
            <person name="Li W."/>
            <person name="Zhang B."/>
            <person name="Hu W."/>
            <person name="Zhang Y."/>
            <person name="Tian X."/>
            <person name="Jiao Y."/>
            <person name="Liang X."/>
            <person name="Jin J."/>
            <person name="Gao L."/>
            <person name="Zheng W."/>
            <person name="Hao B."/>
            <person name="Liu S.-M."/>
            <person name="Wang W."/>
            <person name="Yuan L."/>
            <person name="Cao M."/>
            <person name="McDermott J."/>
            <person name="Samudrala R."/>
            <person name="Wang J."/>
            <person name="Wong G.K.-S."/>
            <person name="Yang H."/>
        </authorList>
    </citation>
    <scope>NUCLEOTIDE SEQUENCE [LARGE SCALE GENOMIC DNA]</scope>
    <source>
        <strain>cv. Nipponbare</strain>
    </source>
</reference>
<reference key="7">
    <citation type="journal article" date="2009" name="Plant Cell Physiol.">
        <title>Overexpression of BiP has inhibitory effects on the accumulation of seed storage proteins in endosperm cells of rice.</title>
        <authorList>
            <person name="Yasuda H."/>
            <person name="Hirose S."/>
            <person name="Kawakatsu T."/>
            <person name="Wakasa Y."/>
            <person name="Takaiwa F."/>
        </authorList>
    </citation>
    <scope>FUNCTION</scope>
    <scope>SUBCELLULAR LOCATION</scope>
</reference>
<reference key="8">
    <citation type="journal article" date="2011" name="Plant J.">
        <title>Expression of ER quality control-related genes in response to changes in BiP1 levels in developing rice endosperm.</title>
        <authorList>
            <person name="Wakasa Y."/>
            <person name="Yasuda H."/>
            <person name="Oono Y."/>
            <person name="Kawakatsu T."/>
            <person name="Hirose S."/>
            <person name="Takahashi H."/>
            <person name="Hayashi S."/>
            <person name="Yang L."/>
            <person name="Takaiwa F."/>
        </authorList>
    </citation>
    <scope>FUNCTION</scope>
    <scope>INDUCTION BY DITHIOTHREITOL</scope>
</reference>
<reference key="9">
    <citation type="journal article" date="2012" name="Plant J.">
        <title>Signal transduction by IRE1-mediated splicing of bZIP50 and other stress sensors in the endoplasmic reticulum stress response of rice.</title>
        <authorList>
            <person name="Hayashi S."/>
            <person name="Wakasa Y."/>
            <person name="Takahashi H."/>
            <person name="Kawakatsu T."/>
            <person name="Takaiwa F."/>
        </authorList>
    </citation>
    <scope>GENE FAMILY</scope>
    <scope>NOMENCLATURE</scope>
</reference>
<reference key="10">
    <citation type="journal article" date="2013" name="J. Exp. Bot.">
        <title>Analysis of rice ER-resident J-proteins reveals diversity and functional differentiation of the ER-resident Hsp70 system in plants.</title>
        <authorList>
            <person name="Ohta M."/>
            <person name="Wakasa Y."/>
            <person name="Takahashi H."/>
            <person name="Hayashi S."/>
            <person name="Kudo K."/>
            <person name="Takaiwa F."/>
        </authorList>
    </citation>
    <scope>INTERACTION WITH P58A; P58B AND ERDJ3B</scope>
    <scope>INDUCTION</scope>
</reference>
<organism>
    <name type="scientific">Oryza sativa subsp. japonica</name>
    <name type="common">Rice</name>
    <dbReference type="NCBI Taxonomy" id="39947"/>
    <lineage>
        <taxon>Eukaryota</taxon>
        <taxon>Viridiplantae</taxon>
        <taxon>Streptophyta</taxon>
        <taxon>Embryophyta</taxon>
        <taxon>Tracheophyta</taxon>
        <taxon>Spermatophyta</taxon>
        <taxon>Magnoliopsida</taxon>
        <taxon>Liliopsida</taxon>
        <taxon>Poales</taxon>
        <taxon>Poaceae</taxon>
        <taxon>BOP clade</taxon>
        <taxon>Oryzoideae</taxon>
        <taxon>Oryzeae</taxon>
        <taxon>Oryzinae</taxon>
        <taxon>Oryza</taxon>
        <taxon>Oryza sativa</taxon>
    </lineage>
</organism>
<feature type="signal peptide" evidence="1">
    <location>
        <begin position="1"/>
        <end position="25"/>
    </location>
</feature>
<feature type="chain" id="PRO_5008176825" description="Heat shock 70 kDa protein BIP1">
    <location>
        <begin position="26"/>
        <end position="665"/>
    </location>
</feature>
<feature type="region of interest" description="Disordered" evidence="4">
    <location>
        <begin position="642"/>
        <end position="665"/>
    </location>
</feature>
<feature type="short sequence motif" description="Prevents secretion from ER" evidence="3">
    <location>
        <begin position="662"/>
        <end position="665"/>
    </location>
</feature>
<feature type="compositionally biased region" description="Gly residues" evidence="4">
    <location>
        <begin position="646"/>
        <end position="655"/>
    </location>
</feature>
<feature type="compositionally biased region" description="Acidic residues" evidence="4">
    <location>
        <begin position="656"/>
        <end position="665"/>
    </location>
</feature>
<feature type="glycosylation site" description="N-linked (GlcNAc...) asparagine" evidence="2">
    <location>
        <position position="614"/>
    </location>
</feature>
<feature type="sequence conflict" description="In Ref. 1; AAB63469." evidence="12" ref="1">
    <original>C</original>
    <variation>S</variation>
    <location>
        <position position="7"/>
    </location>
</feature>
<feature type="sequence conflict" description="In Ref. 1; AAB63469." evidence="12" ref="1">
    <original>L</original>
    <variation>D</variation>
    <location>
        <position position="102"/>
    </location>
</feature>
<feature type="sequence conflict" description="In Ref. 1; AAB63469." evidence="12" ref="1">
    <original>D</original>
    <variation>E</variation>
    <location>
        <position position="109"/>
    </location>
</feature>
<feature type="sequence conflict" description="In Ref. 1; AAB63469." evidence="12" ref="1">
    <original>D</original>
    <variation>I</variation>
    <location>
        <position position="127"/>
    </location>
</feature>
<feature type="sequence conflict" description="In Ref. 1; AAB63469." evidence="12" ref="1">
    <original>GADGEGGV</original>
    <variation>RRRGRL</variation>
    <location>
        <begin position="651"/>
        <end position="658"/>
    </location>
</feature>
<keyword id="KW-0067">ATP-binding</keyword>
<keyword id="KW-0143">Chaperone</keyword>
<keyword id="KW-0256">Endoplasmic reticulum</keyword>
<keyword id="KW-0325">Glycoprotein</keyword>
<keyword id="KW-0547">Nucleotide-binding</keyword>
<keyword id="KW-1185">Reference proteome</keyword>
<keyword id="KW-0732">Signal</keyword>
<keyword id="KW-0346">Stress response</keyword>
<protein>
    <recommendedName>
        <fullName evidence="12">Heat shock 70 kDa protein BIP1</fullName>
    </recommendedName>
    <alternativeName>
        <fullName evidence="12">Luminal-binding protein 1</fullName>
        <shortName evidence="10">OsBiP1</shortName>
    </alternativeName>
</protein>
<gene>
    <name evidence="9" type="primary">BIP1</name>
    <name evidence="11" type="synonym">BIP</name>
    <name evidence="16" type="ordered locus">Os02g0115900</name>
    <name evidence="12" type="ordered locus">LOC_Os02g02410</name>
    <name evidence="14" type="ORF">OJ1442_E05.10</name>
    <name evidence="17" type="ORF">OsJ_05115</name>
    <name evidence="15" type="ORF">P0036E06.29</name>
</gene>
<evidence type="ECO:0000255" key="1"/>
<evidence type="ECO:0000255" key="2">
    <source>
        <dbReference type="PROSITE-ProRule" id="PRU00498"/>
    </source>
</evidence>
<evidence type="ECO:0000255" key="3">
    <source>
        <dbReference type="PROSITE-ProRule" id="PRU10138"/>
    </source>
</evidence>
<evidence type="ECO:0000256" key="4">
    <source>
        <dbReference type="SAM" id="MobiDB-lite"/>
    </source>
</evidence>
<evidence type="ECO:0000269" key="5">
    <source>
    </source>
</evidence>
<evidence type="ECO:0000269" key="6">
    <source>
    </source>
</evidence>
<evidence type="ECO:0000269" key="7">
    <source>
    </source>
</evidence>
<evidence type="ECO:0000269" key="8">
    <source>
    </source>
</evidence>
<evidence type="ECO:0000303" key="9">
    <source>
    </source>
</evidence>
<evidence type="ECO:0000303" key="10">
    <source>
    </source>
</evidence>
<evidence type="ECO:0000303" key="11">
    <source>
    </source>
</evidence>
<evidence type="ECO:0000305" key="12"/>
<evidence type="ECO:0000305" key="13">
    <source>
    </source>
</evidence>
<evidence type="ECO:0000312" key="14">
    <source>
        <dbReference type="EMBL" id="BAD07713.1"/>
    </source>
</evidence>
<evidence type="ECO:0000312" key="15">
    <source>
        <dbReference type="EMBL" id="BAD07938.1"/>
    </source>
</evidence>
<evidence type="ECO:0000312" key="16">
    <source>
        <dbReference type="EMBL" id="BAF07589.1"/>
    </source>
</evidence>
<evidence type="ECO:0000312" key="17">
    <source>
        <dbReference type="EMBL" id="EAZ21491.1"/>
    </source>
</evidence>
<proteinExistence type="evidence at protein level"/>
<sequence length="665" mass="73390">MDRVRGCAFLLGVLLAGSLFAFSVAKEETKKLGTVIGIDLGTTYSCVGVYKNGHVEIIANDQGNRITPSWVAFTDSERLIGEAAKNQAAVNPERTIFDVKRLIGRKFEDKEVQRDMKLVPYKIVNKDGKPYIQVKIKDGENKVFSPEEVSAMILGKMKETAEAYLGKKINDAVVTVPAYFNDAQRQATKDAGVIAGLNVARIINEPTAAAIAYGLDKKGGEKNILVFDLGGGTFDVSILTIDNGVFEVLATNGDTHLGGEDFDQRIMEYFIKLIKKKYSKDISKDNRALGKLRREAERAKRALSNQHQVRVEIESLFDGTDFSEPLTRARFEELNNDLFRKTMGPVKKAMDDAGLEKSQIHEIVLVGGSTRIPKVQQLLRDYFEGKEPNKGVNPDEAVAYGAAVQGSILSGEGGDETKDILLLDVAPLTLGIETVGGVMTKLIPRNTVIPTKKSQVFTTYQDQQTTVSIQVFEGERSMTKDCRLLGKFDLSGIPAAPRGTPQIEVTFEVDANGILNVKAEDKGTGKSEKITITNEKGRLSQEEIDRMVREAEEFAEEDKKVKERIDARNQLETYVYNMKNTVGDKDKLADKLESEEKEKVEEALKEALEWLDENQTAEKEEYEEKLKEVEAVCNPIISAVYQRTGGAPGGGADGEGGVDDEHDEL</sequence>
<dbReference type="EMBL" id="AF006825">
    <property type="protein sequence ID" value="AAB63469.1"/>
    <property type="molecule type" value="mRNA"/>
</dbReference>
<dbReference type="EMBL" id="EU267978">
    <property type="protein sequence ID" value="ACA50500.1"/>
    <property type="molecule type" value="mRNA"/>
</dbReference>
<dbReference type="EMBL" id="AP004121">
    <property type="protein sequence ID" value="BAD07713.1"/>
    <property type="molecule type" value="Genomic_DNA"/>
</dbReference>
<dbReference type="EMBL" id="AP004867">
    <property type="protein sequence ID" value="BAD07938.1"/>
    <property type="molecule type" value="Genomic_DNA"/>
</dbReference>
<dbReference type="EMBL" id="AP008208">
    <property type="protein sequence ID" value="BAF07589.1"/>
    <property type="molecule type" value="Genomic_DNA"/>
</dbReference>
<dbReference type="EMBL" id="AP014958">
    <property type="protein sequence ID" value="BAS76651.1"/>
    <property type="molecule type" value="Genomic_DNA"/>
</dbReference>
<dbReference type="EMBL" id="CM000139">
    <property type="protein sequence ID" value="EAZ21491.1"/>
    <property type="molecule type" value="Genomic_DNA"/>
</dbReference>
<dbReference type="PIR" id="T03581">
    <property type="entry name" value="T03581"/>
</dbReference>
<dbReference type="RefSeq" id="NP_001388678.1">
    <property type="nucleotide sequence ID" value="NM_001401749.1"/>
</dbReference>
<dbReference type="RefSeq" id="XP_015625618.1">
    <property type="nucleotide sequence ID" value="XM_015770132.1"/>
</dbReference>
<dbReference type="SMR" id="Q6Z7B0"/>
<dbReference type="FunCoup" id="Q6Z7B0">
    <property type="interactions" value="2498"/>
</dbReference>
<dbReference type="STRING" id="39947.Q6Z7B0"/>
<dbReference type="CarbonylDB" id="Q6Z7B0"/>
<dbReference type="GlyCosmos" id="Q6Z7B0">
    <property type="glycosylation" value="1 site, No reported glycans"/>
</dbReference>
<dbReference type="PaxDb" id="39947-Q6Z7B0"/>
<dbReference type="EnsemblPlants" id="Os02t0115900-01">
    <property type="protein sequence ID" value="Os02t0115900-01"/>
    <property type="gene ID" value="Os02g0115900"/>
</dbReference>
<dbReference type="EnsemblPlants" id="Os02t0115900-02">
    <property type="protein sequence ID" value="Os02t0115900-02"/>
    <property type="gene ID" value="Os02g0115900"/>
</dbReference>
<dbReference type="GeneID" id="4328075"/>
<dbReference type="Gramene" id="Os02t0115900-01">
    <property type="protein sequence ID" value="Os02t0115900-01"/>
    <property type="gene ID" value="Os02g0115900"/>
</dbReference>
<dbReference type="Gramene" id="Os02t0115900-02">
    <property type="protein sequence ID" value="Os02t0115900-02"/>
    <property type="gene ID" value="Os02g0115900"/>
</dbReference>
<dbReference type="KEGG" id="dosa:Os02g0115900"/>
<dbReference type="eggNOG" id="KOG0100">
    <property type="taxonomic scope" value="Eukaryota"/>
</dbReference>
<dbReference type="HOGENOM" id="CLU_005965_7_2_1"/>
<dbReference type="InParanoid" id="Q6Z7B0"/>
<dbReference type="OMA" id="DSKPCIE"/>
<dbReference type="OrthoDB" id="2401965at2759"/>
<dbReference type="Proteomes" id="UP000000763">
    <property type="component" value="Chromosome 2"/>
</dbReference>
<dbReference type="Proteomes" id="UP000007752">
    <property type="component" value="Chromosome 2"/>
</dbReference>
<dbReference type="Proteomes" id="UP000059680">
    <property type="component" value="Chromosome 2"/>
</dbReference>
<dbReference type="ExpressionAtlas" id="Q6Z7B0">
    <property type="expression patterns" value="baseline and differential"/>
</dbReference>
<dbReference type="GO" id="GO:0005737">
    <property type="term" value="C:cytoplasm"/>
    <property type="evidence" value="ECO:0000318"/>
    <property type="project" value="GO_Central"/>
</dbReference>
<dbReference type="GO" id="GO:0034663">
    <property type="term" value="C:endoplasmic reticulum chaperone complex"/>
    <property type="evidence" value="ECO:0000318"/>
    <property type="project" value="GO_Central"/>
</dbReference>
<dbReference type="GO" id="GO:0005788">
    <property type="term" value="C:endoplasmic reticulum lumen"/>
    <property type="evidence" value="ECO:0000314"/>
    <property type="project" value="UniProtKB"/>
</dbReference>
<dbReference type="GO" id="GO:0016020">
    <property type="term" value="C:membrane"/>
    <property type="evidence" value="ECO:0000318"/>
    <property type="project" value="GO_Central"/>
</dbReference>
<dbReference type="GO" id="GO:0005634">
    <property type="term" value="C:nucleus"/>
    <property type="evidence" value="ECO:0000318"/>
    <property type="project" value="GO_Central"/>
</dbReference>
<dbReference type="GO" id="GO:0009705">
    <property type="term" value="C:plant-type vacuole membrane"/>
    <property type="evidence" value="ECO:0000314"/>
    <property type="project" value="UniProtKB"/>
</dbReference>
<dbReference type="GO" id="GO:0005524">
    <property type="term" value="F:ATP binding"/>
    <property type="evidence" value="ECO:0007669"/>
    <property type="project" value="UniProtKB-KW"/>
</dbReference>
<dbReference type="GO" id="GO:0016887">
    <property type="term" value="F:ATP hydrolysis activity"/>
    <property type="evidence" value="ECO:0000318"/>
    <property type="project" value="GO_Central"/>
</dbReference>
<dbReference type="GO" id="GO:0140662">
    <property type="term" value="F:ATP-dependent protein folding chaperone"/>
    <property type="evidence" value="ECO:0007669"/>
    <property type="project" value="InterPro"/>
</dbReference>
<dbReference type="GO" id="GO:0031072">
    <property type="term" value="F:heat shock protein binding"/>
    <property type="evidence" value="ECO:0000318"/>
    <property type="project" value="GO_Central"/>
</dbReference>
<dbReference type="GO" id="GO:0044183">
    <property type="term" value="F:protein folding chaperone"/>
    <property type="evidence" value="ECO:0000318"/>
    <property type="project" value="GO_Central"/>
</dbReference>
<dbReference type="GO" id="GO:0051085">
    <property type="term" value="P:chaperone cofactor-dependent protein refolding"/>
    <property type="evidence" value="ECO:0000318"/>
    <property type="project" value="GO_Central"/>
</dbReference>
<dbReference type="GO" id="GO:0030968">
    <property type="term" value="P:endoplasmic reticulum unfolded protein response"/>
    <property type="evidence" value="ECO:0000318"/>
    <property type="project" value="GO_Central"/>
</dbReference>
<dbReference type="GO" id="GO:0036503">
    <property type="term" value="P:ERAD pathway"/>
    <property type="evidence" value="ECO:0000318"/>
    <property type="project" value="GO_Central"/>
</dbReference>
<dbReference type="GO" id="GO:0034975">
    <property type="term" value="P:protein folding in endoplasmic reticulum"/>
    <property type="evidence" value="ECO:0000315"/>
    <property type="project" value="UniProtKB"/>
</dbReference>
<dbReference type="GO" id="GO:0042026">
    <property type="term" value="P:protein refolding"/>
    <property type="evidence" value="ECO:0000318"/>
    <property type="project" value="GO_Central"/>
</dbReference>
<dbReference type="CDD" id="cd10241">
    <property type="entry name" value="ASKHA_NBD_HSP70_BiP"/>
    <property type="match status" value="1"/>
</dbReference>
<dbReference type="FunFam" id="3.30.420.40:FF:000020">
    <property type="entry name" value="Chaperone protein HscA homolog"/>
    <property type="match status" value="1"/>
</dbReference>
<dbReference type="FunFam" id="2.60.34.10:FF:000002">
    <property type="entry name" value="Heat shock 70 kDa"/>
    <property type="match status" value="1"/>
</dbReference>
<dbReference type="FunFam" id="3.90.640.10:FF:000002">
    <property type="entry name" value="Heat shock 70 kDa"/>
    <property type="match status" value="1"/>
</dbReference>
<dbReference type="FunFam" id="3.30.420.40:FF:000026">
    <property type="entry name" value="Heat shock protein 70"/>
    <property type="match status" value="1"/>
</dbReference>
<dbReference type="FunFam" id="3.30.30.30:FF:000005">
    <property type="entry name" value="Heat shock protein ssb1"/>
    <property type="match status" value="1"/>
</dbReference>
<dbReference type="FunFam" id="1.20.1270.10:FF:000015">
    <property type="entry name" value="Luminal-binding protein 5"/>
    <property type="match status" value="1"/>
</dbReference>
<dbReference type="Gene3D" id="1.20.1270.10">
    <property type="match status" value="1"/>
</dbReference>
<dbReference type="Gene3D" id="3.30.420.40">
    <property type="match status" value="2"/>
</dbReference>
<dbReference type="Gene3D" id="3.90.640.10">
    <property type="entry name" value="Actin, Chain A, domain 4"/>
    <property type="match status" value="1"/>
</dbReference>
<dbReference type="Gene3D" id="2.60.34.10">
    <property type="entry name" value="Substrate Binding Domain Of DNAk, Chain A, domain 1"/>
    <property type="match status" value="1"/>
</dbReference>
<dbReference type="InterPro" id="IPR043129">
    <property type="entry name" value="ATPase_NBD"/>
</dbReference>
<dbReference type="InterPro" id="IPR042050">
    <property type="entry name" value="BIP_NBD"/>
</dbReference>
<dbReference type="InterPro" id="IPR018181">
    <property type="entry name" value="Heat_shock_70_CS"/>
</dbReference>
<dbReference type="InterPro" id="IPR029048">
    <property type="entry name" value="HSP70_C_sf"/>
</dbReference>
<dbReference type="InterPro" id="IPR029047">
    <property type="entry name" value="HSP70_peptide-bd_sf"/>
</dbReference>
<dbReference type="InterPro" id="IPR013126">
    <property type="entry name" value="Hsp_70_fam"/>
</dbReference>
<dbReference type="NCBIfam" id="NF001413">
    <property type="entry name" value="PRK00290.1"/>
    <property type="match status" value="1"/>
</dbReference>
<dbReference type="PANTHER" id="PTHR19375">
    <property type="entry name" value="HEAT SHOCK PROTEIN 70KDA"/>
    <property type="match status" value="1"/>
</dbReference>
<dbReference type="Pfam" id="PF00012">
    <property type="entry name" value="HSP70"/>
    <property type="match status" value="1"/>
</dbReference>
<dbReference type="PRINTS" id="PR00301">
    <property type="entry name" value="HEATSHOCK70"/>
</dbReference>
<dbReference type="SUPFAM" id="SSF53067">
    <property type="entry name" value="Actin-like ATPase domain"/>
    <property type="match status" value="2"/>
</dbReference>
<dbReference type="SUPFAM" id="SSF100934">
    <property type="entry name" value="Heat shock protein 70kD (HSP70), C-terminal subdomain"/>
    <property type="match status" value="1"/>
</dbReference>
<dbReference type="SUPFAM" id="SSF100920">
    <property type="entry name" value="Heat shock protein 70kD (HSP70), peptide-binding domain"/>
    <property type="match status" value="1"/>
</dbReference>
<dbReference type="PROSITE" id="PS00014">
    <property type="entry name" value="ER_TARGET"/>
    <property type="match status" value="1"/>
</dbReference>
<dbReference type="PROSITE" id="PS00297">
    <property type="entry name" value="HSP70_1"/>
    <property type="match status" value="1"/>
</dbReference>
<dbReference type="PROSITE" id="PS00329">
    <property type="entry name" value="HSP70_2"/>
    <property type="match status" value="1"/>
</dbReference>
<dbReference type="PROSITE" id="PS01036">
    <property type="entry name" value="HSP70_3"/>
    <property type="match status" value="1"/>
</dbReference>